<sequence>MALFFFLLLLISHREQLLLVQGHQMRDLLPTPRNRSNGRLPSPFSRVINPSTHLSIHKKALPRGERKLQDEYALDSRIHSRPDPLWNFRNLQKHSRKGLVMIFSKITRC</sequence>
<geneLocation type="mitochondrion"/>
<keyword id="KW-0496">Mitochondrion</keyword>
<keyword id="KW-1185">Reference proteome</keyword>
<protein>
    <recommendedName>
        <fullName>Uncharacterized mitochondrial protein AtMg00530</fullName>
    </recommendedName>
    <alternativeName>
        <fullName>ORF109</fullName>
    </alternativeName>
</protein>
<feature type="chain" id="PRO_0000196775" description="Uncharacterized mitochondrial protein AtMg00530">
    <location>
        <begin position="1"/>
        <end position="109"/>
    </location>
</feature>
<feature type="sequence conflict" description="In Ref. 5; BAF01764." evidence="1" ref="5">
    <original>S</original>
    <variation>P</variation>
    <location>
        <position position="55"/>
    </location>
</feature>
<dbReference type="EMBL" id="Y08501">
    <property type="protein sequence ID" value="CAA69737.1"/>
    <property type="molecule type" value="Genomic_DNA"/>
</dbReference>
<dbReference type="EMBL" id="BK010421">
    <property type="status" value="NOT_ANNOTATED_CDS"/>
    <property type="molecule type" value="Genomic_DNA"/>
</dbReference>
<dbReference type="EMBL" id="AC007729">
    <property type="status" value="NOT_ANNOTATED_CDS"/>
    <property type="molecule type" value="Genomic_DNA"/>
</dbReference>
<dbReference type="EMBL" id="AC007730">
    <property type="status" value="NOT_ANNOTATED_CDS"/>
    <property type="molecule type" value="Genomic_DNA"/>
</dbReference>
<dbReference type="EMBL" id="CP002685">
    <property type="protein sequence ID" value="AEC06060.1"/>
    <property type="molecule type" value="Genomic_DNA"/>
</dbReference>
<dbReference type="EMBL" id="AK229938">
    <property type="protein sequence ID" value="BAF01764.1"/>
    <property type="molecule type" value="mRNA"/>
</dbReference>
<dbReference type="RefSeq" id="NP_085513.1">
    <property type="nucleotide sequence ID" value="NC_001284.2"/>
</dbReference>
<dbReference type="RefSeq" id="NP_973437.1">
    <property type="nucleotide sequence ID" value="NM_201708.2"/>
</dbReference>
<dbReference type="STRING" id="3702.P93308"/>
<dbReference type="PaxDb" id="3702-AT2G07776.2"/>
<dbReference type="EnsemblPlants" id="AT2G07776.2">
    <property type="protein sequence ID" value="AT2G07776.2"/>
    <property type="gene ID" value="AT2G07776"/>
</dbReference>
<dbReference type="EnsemblPlants" id="ATMG00530.1">
    <property type="protein sequence ID" value="ATMG00530.1"/>
    <property type="gene ID" value="ATMG00530"/>
</dbReference>
<dbReference type="GeneID" id="815417"/>
<dbReference type="Gramene" id="AT2G07776.2">
    <property type="protein sequence ID" value="AT2G07776.2"/>
    <property type="gene ID" value="AT2G07776"/>
</dbReference>
<dbReference type="Gramene" id="ATMG00530.1">
    <property type="protein sequence ID" value="ATMG00530.1"/>
    <property type="gene ID" value="ATMG00530"/>
</dbReference>
<dbReference type="KEGG" id="ath:AT2G07776"/>
<dbReference type="Araport" id="AT2G07776"/>
<dbReference type="Araport" id="ATMG00530"/>
<dbReference type="TAIR" id="AT2G07776"/>
<dbReference type="TAIR" id="ATMG00530">
    <property type="gene designation" value="ORF109"/>
</dbReference>
<dbReference type="eggNOG" id="ENOG502SYQJ">
    <property type="taxonomic scope" value="Eukaryota"/>
</dbReference>
<dbReference type="HOGENOM" id="CLU_2187526_0_0_1"/>
<dbReference type="InParanoid" id="P93308"/>
<dbReference type="OMA" id="KNEWAPL"/>
<dbReference type="PhylomeDB" id="P93308"/>
<dbReference type="PRO" id="PR:P93308"/>
<dbReference type="Proteomes" id="UP000006548">
    <property type="component" value="Chromosome 2"/>
</dbReference>
<dbReference type="Proteomes" id="UP000006548">
    <property type="component" value="Mitochondrion MT"/>
</dbReference>
<dbReference type="ExpressionAtlas" id="P93308">
    <property type="expression patterns" value="baseline and differential"/>
</dbReference>
<dbReference type="GO" id="GO:0005739">
    <property type="term" value="C:mitochondrion"/>
    <property type="evidence" value="ECO:0007669"/>
    <property type="project" value="UniProtKB-SubCell"/>
</dbReference>
<gene>
    <name evidence="3" type="ordered locus">AtMg00530</name>
</gene>
<gene>
    <name evidence="2" type="ordered locus">At2g07776</name>
</gene>
<name>M530_ARATH</name>
<organism>
    <name type="scientific">Arabidopsis thaliana</name>
    <name type="common">Mouse-ear cress</name>
    <dbReference type="NCBI Taxonomy" id="3702"/>
    <lineage>
        <taxon>Eukaryota</taxon>
        <taxon>Viridiplantae</taxon>
        <taxon>Streptophyta</taxon>
        <taxon>Embryophyta</taxon>
        <taxon>Tracheophyta</taxon>
        <taxon>Spermatophyta</taxon>
        <taxon>Magnoliopsida</taxon>
        <taxon>eudicotyledons</taxon>
        <taxon>Gunneridae</taxon>
        <taxon>Pentapetalae</taxon>
        <taxon>rosids</taxon>
        <taxon>malvids</taxon>
        <taxon>Brassicales</taxon>
        <taxon>Brassicaceae</taxon>
        <taxon>Camelineae</taxon>
        <taxon>Arabidopsis</taxon>
    </lineage>
</organism>
<accession>P93308</accession>
<accession>Q0WM92</accession>
<proteinExistence type="predicted"/>
<evidence type="ECO:0000305" key="1"/>
<evidence type="ECO:0000312" key="2">
    <source>
        <dbReference type="Araport" id="AT2G07776"/>
    </source>
</evidence>
<evidence type="ECO:0000312" key="3">
    <source>
        <dbReference type="Araport" id="ATMG00530"/>
    </source>
</evidence>
<comment type="subcellular location">
    <subcellularLocation>
        <location evidence="1">Mitochondrion</location>
    </subcellularLocation>
</comment>
<comment type="miscellaneous">
    <text>A stretch of 270 kb of the mitochondrial genome is duplicated within the centromere of chromosome 2 resulting in the duplication of the gene. The expression of this duplicated gene (At2g07776) is demonstrated.</text>
</comment>
<reference key="1">
    <citation type="journal article" date="1997" name="Nat. Genet.">
        <title>The mitochondrial genome of Arabidopsis thaliana contains 57 genes in 366,924 nucleotides.</title>
        <authorList>
            <person name="Unseld M."/>
            <person name="Marienfeld J.R."/>
            <person name="Brandt P."/>
            <person name="Brennicke A."/>
        </authorList>
    </citation>
    <scope>NUCLEOTIDE SEQUENCE [LARGE SCALE GENOMIC DNA]</scope>
    <source>
        <strain>cv. C24</strain>
    </source>
</reference>
<reference key="2">
    <citation type="journal article" date="2018" name="Plant Cell">
        <title>Correction of persistent errors in Arabidopsis reference mitochondrial genomes.</title>
        <authorList>
            <person name="Sloan D.B."/>
            <person name="Wu Z."/>
            <person name="Sharbrough J."/>
        </authorList>
    </citation>
    <scope>NUCLEOTIDE SEQUENCE [LARGE SCALE GENOMIC DNA]</scope>
    <source>
        <strain>cv. Columbia</strain>
    </source>
</reference>
<reference key="3">
    <citation type="journal article" date="1999" name="Nature">
        <title>Sequence and analysis of chromosome 2 of the plant Arabidopsis thaliana.</title>
        <authorList>
            <person name="Lin X."/>
            <person name="Kaul S."/>
            <person name="Rounsley S.D."/>
            <person name="Shea T.P."/>
            <person name="Benito M.-I."/>
            <person name="Town C.D."/>
            <person name="Fujii C.Y."/>
            <person name="Mason T.M."/>
            <person name="Bowman C.L."/>
            <person name="Barnstead M.E."/>
            <person name="Feldblyum T.V."/>
            <person name="Buell C.R."/>
            <person name="Ketchum K.A."/>
            <person name="Lee J.J."/>
            <person name="Ronning C.M."/>
            <person name="Koo H.L."/>
            <person name="Moffat K.S."/>
            <person name="Cronin L.A."/>
            <person name="Shen M."/>
            <person name="Pai G."/>
            <person name="Van Aken S."/>
            <person name="Umayam L."/>
            <person name="Tallon L.J."/>
            <person name="Gill J.E."/>
            <person name="Adams M.D."/>
            <person name="Carrera A.J."/>
            <person name="Creasy T.H."/>
            <person name="Goodman H.M."/>
            <person name="Somerville C.R."/>
            <person name="Copenhaver G.P."/>
            <person name="Preuss D."/>
            <person name="Nierman W.C."/>
            <person name="White O."/>
            <person name="Eisen J.A."/>
            <person name="Salzberg S.L."/>
            <person name="Fraser C.M."/>
            <person name="Venter J.C."/>
        </authorList>
    </citation>
    <scope>NUCLEOTIDE SEQUENCE [LARGE SCALE GENOMIC DNA] (AT2G07776)</scope>
    <source>
        <strain>cv. Columbia</strain>
    </source>
</reference>
<reference key="4">
    <citation type="journal article" date="2017" name="Plant J.">
        <title>Araport11: a complete reannotation of the Arabidopsis thaliana reference genome.</title>
        <authorList>
            <person name="Cheng C.Y."/>
            <person name="Krishnakumar V."/>
            <person name="Chan A.P."/>
            <person name="Thibaud-Nissen F."/>
            <person name="Schobel S."/>
            <person name="Town C.D."/>
        </authorList>
    </citation>
    <scope>GENOME REANNOTATION (AT2G07776)</scope>
    <source>
        <strain>cv. Columbia</strain>
    </source>
</reference>
<reference key="5">
    <citation type="submission" date="2006-07" db="EMBL/GenBank/DDBJ databases">
        <title>Large-scale analysis of RIKEN Arabidopsis full-length (RAFL) cDNAs.</title>
        <authorList>
            <person name="Totoki Y."/>
            <person name="Seki M."/>
            <person name="Ishida J."/>
            <person name="Nakajima M."/>
            <person name="Enju A."/>
            <person name="Kamiya A."/>
            <person name="Narusaka M."/>
            <person name="Shin-i T."/>
            <person name="Nakagawa M."/>
            <person name="Sakamoto N."/>
            <person name="Oishi K."/>
            <person name="Kohara Y."/>
            <person name="Kobayashi M."/>
            <person name="Toyoda A."/>
            <person name="Sakaki Y."/>
            <person name="Sakurai T."/>
            <person name="Iida K."/>
            <person name="Akiyama K."/>
            <person name="Satou M."/>
            <person name="Toyoda T."/>
            <person name="Konagaya A."/>
            <person name="Carninci P."/>
            <person name="Kawai J."/>
            <person name="Hayashizaki Y."/>
            <person name="Shinozaki K."/>
        </authorList>
    </citation>
    <scope>NUCLEOTIDE SEQUENCE [LARGE SCALE MRNA] (AT2G07776)</scope>
    <source>
        <strain>cv. Columbia</strain>
    </source>
</reference>